<proteinExistence type="inferred from homology"/>
<accession>Q4JUX2</accession>
<protein>
    <recommendedName>
        <fullName evidence="1">3-isopropylmalate dehydratase large subunit</fullName>
        <ecNumber evidence="1">4.2.1.33</ecNumber>
    </recommendedName>
    <alternativeName>
        <fullName evidence="1">Alpha-IPM isomerase</fullName>
        <shortName evidence="1">IPMI</shortName>
    </alternativeName>
    <alternativeName>
        <fullName evidence="1">Isopropylmalate isomerase</fullName>
    </alternativeName>
</protein>
<dbReference type="EC" id="4.2.1.33" evidence="1"/>
<dbReference type="EMBL" id="CR931997">
    <property type="protein sequence ID" value="CAI37385.1"/>
    <property type="molecule type" value="Genomic_DNA"/>
</dbReference>
<dbReference type="RefSeq" id="WP_011273737.1">
    <property type="nucleotide sequence ID" value="NC_007164.1"/>
</dbReference>
<dbReference type="SMR" id="Q4JUX2"/>
<dbReference type="STRING" id="306537.jk1221"/>
<dbReference type="GeneID" id="92738739"/>
<dbReference type="KEGG" id="cjk:jk1221"/>
<dbReference type="PATRIC" id="fig|306537.10.peg.1236"/>
<dbReference type="eggNOG" id="COG0065">
    <property type="taxonomic scope" value="Bacteria"/>
</dbReference>
<dbReference type="HOGENOM" id="CLU_006714_3_4_11"/>
<dbReference type="OrthoDB" id="9802769at2"/>
<dbReference type="UniPathway" id="UPA00048">
    <property type="reaction ID" value="UER00071"/>
</dbReference>
<dbReference type="Proteomes" id="UP000000545">
    <property type="component" value="Chromosome"/>
</dbReference>
<dbReference type="GO" id="GO:0003861">
    <property type="term" value="F:3-isopropylmalate dehydratase activity"/>
    <property type="evidence" value="ECO:0007669"/>
    <property type="project" value="UniProtKB-UniRule"/>
</dbReference>
<dbReference type="GO" id="GO:0051539">
    <property type="term" value="F:4 iron, 4 sulfur cluster binding"/>
    <property type="evidence" value="ECO:0007669"/>
    <property type="project" value="UniProtKB-KW"/>
</dbReference>
<dbReference type="GO" id="GO:0046872">
    <property type="term" value="F:metal ion binding"/>
    <property type="evidence" value="ECO:0007669"/>
    <property type="project" value="UniProtKB-KW"/>
</dbReference>
<dbReference type="GO" id="GO:0009098">
    <property type="term" value="P:L-leucine biosynthetic process"/>
    <property type="evidence" value="ECO:0007669"/>
    <property type="project" value="UniProtKB-UniRule"/>
</dbReference>
<dbReference type="CDD" id="cd01583">
    <property type="entry name" value="IPMI"/>
    <property type="match status" value="1"/>
</dbReference>
<dbReference type="FunFam" id="3.30.499.10:FF:000007">
    <property type="entry name" value="3-isopropylmalate dehydratase large subunit"/>
    <property type="match status" value="1"/>
</dbReference>
<dbReference type="Gene3D" id="3.30.499.10">
    <property type="entry name" value="Aconitase, domain 3"/>
    <property type="match status" value="2"/>
</dbReference>
<dbReference type="HAMAP" id="MF_01026">
    <property type="entry name" value="LeuC_type1"/>
    <property type="match status" value="1"/>
</dbReference>
<dbReference type="InterPro" id="IPR004430">
    <property type="entry name" value="3-IsopropMal_deHydase_lsu"/>
</dbReference>
<dbReference type="InterPro" id="IPR015931">
    <property type="entry name" value="Acnase/IPM_dHydase_lsu_aba_1/3"/>
</dbReference>
<dbReference type="InterPro" id="IPR001030">
    <property type="entry name" value="Acoase/IPM_deHydtase_lsu_aba"/>
</dbReference>
<dbReference type="InterPro" id="IPR018136">
    <property type="entry name" value="Aconitase_4Fe-4S_BS"/>
</dbReference>
<dbReference type="InterPro" id="IPR036008">
    <property type="entry name" value="Aconitase_4Fe-4S_dom"/>
</dbReference>
<dbReference type="InterPro" id="IPR050067">
    <property type="entry name" value="IPM_dehydratase_rel_enz"/>
</dbReference>
<dbReference type="InterPro" id="IPR033941">
    <property type="entry name" value="IPMI_cat"/>
</dbReference>
<dbReference type="NCBIfam" id="TIGR00170">
    <property type="entry name" value="leuC"/>
    <property type="match status" value="1"/>
</dbReference>
<dbReference type="NCBIfam" id="NF004016">
    <property type="entry name" value="PRK05478.1"/>
    <property type="match status" value="1"/>
</dbReference>
<dbReference type="NCBIfam" id="NF009116">
    <property type="entry name" value="PRK12466.1"/>
    <property type="match status" value="1"/>
</dbReference>
<dbReference type="PANTHER" id="PTHR43822:SF9">
    <property type="entry name" value="3-ISOPROPYLMALATE DEHYDRATASE"/>
    <property type="match status" value="1"/>
</dbReference>
<dbReference type="PANTHER" id="PTHR43822">
    <property type="entry name" value="HOMOACONITASE, MITOCHONDRIAL-RELATED"/>
    <property type="match status" value="1"/>
</dbReference>
<dbReference type="Pfam" id="PF00330">
    <property type="entry name" value="Aconitase"/>
    <property type="match status" value="1"/>
</dbReference>
<dbReference type="PRINTS" id="PR00415">
    <property type="entry name" value="ACONITASE"/>
</dbReference>
<dbReference type="SUPFAM" id="SSF53732">
    <property type="entry name" value="Aconitase iron-sulfur domain"/>
    <property type="match status" value="1"/>
</dbReference>
<dbReference type="PROSITE" id="PS00450">
    <property type="entry name" value="ACONITASE_1"/>
    <property type="match status" value="1"/>
</dbReference>
<dbReference type="PROSITE" id="PS01244">
    <property type="entry name" value="ACONITASE_2"/>
    <property type="match status" value="1"/>
</dbReference>
<evidence type="ECO:0000255" key="1">
    <source>
        <dbReference type="HAMAP-Rule" id="MF_01026"/>
    </source>
</evidence>
<evidence type="ECO:0000256" key="2">
    <source>
        <dbReference type="SAM" id="MobiDB-lite"/>
    </source>
</evidence>
<sequence>MTNQPLTLAEKVWRDHIVAAGENGGPDLLYIDLHLVHEVTSPQAFDGLRQAGRKVRRPDLTIATEDHNVPTIGVKTGDLQEIQEPTSRLQVSTLRDNAKEFGIRLHSMGDIEQGIVHTVGPQLGLTQPGMTVVCGDSHTSTHGAFGSIAMGIGTSEVEHVLATQTLPLKPFKTMAIEVSGELQPDVTSKDLILAIIAKIGTGGGQGHIIEYRGEAIEKLSMEARMTMCNMSIEAGARAGMIAPDQVTFDYLEGRPHAPKGADWDAAVEYWKSLRTDDDAQFDTVVHIDGSALTPFVTWGTNPGQGLPLAEAIPQLEDFTNDNDRLAAERAMEYMDLQPGTPLRDIKIDTVFLGSCTNSRIEDLRAAADVLKGRTVADGTRMIVVPSSTRVKMQAEEEGLDQIFIDAGAEWRTAGCSMCLGMNPDQLAPGERSASTSNRNFEGRQGKGGRTHLVSPPVAAATAVTGHLAGPADL</sequence>
<keyword id="KW-0004">4Fe-4S</keyword>
<keyword id="KW-0028">Amino-acid biosynthesis</keyword>
<keyword id="KW-0100">Branched-chain amino acid biosynthesis</keyword>
<keyword id="KW-0408">Iron</keyword>
<keyword id="KW-0411">Iron-sulfur</keyword>
<keyword id="KW-0432">Leucine biosynthesis</keyword>
<keyword id="KW-0456">Lyase</keyword>
<keyword id="KW-0479">Metal-binding</keyword>
<keyword id="KW-1185">Reference proteome</keyword>
<reference key="1">
    <citation type="journal article" date="2005" name="J. Bacteriol.">
        <title>Complete genome sequence and analysis of the multiresistant nosocomial pathogen Corynebacterium jeikeium K411, a lipid-requiring bacterium of the human skin flora.</title>
        <authorList>
            <person name="Tauch A."/>
            <person name="Kaiser O."/>
            <person name="Hain T."/>
            <person name="Goesmann A."/>
            <person name="Weisshaar B."/>
            <person name="Albersmeier A."/>
            <person name="Bekel T."/>
            <person name="Bischoff N."/>
            <person name="Brune I."/>
            <person name="Chakraborty T."/>
            <person name="Kalinowski J."/>
            <person name="Meyer F."/>
            <person name="Rupp O."/>
            <person name="Schneiker S."/>
            <person name="Viehoever P."/>
            <person name="Puehler A."/>
        </authorList>
    </citation>
    <scope>NUCLEOTIDE SEQUENCE [LARGE SCALE GENOMIC DNA]</scope>
    <source>
        <strain>K411</strain>
    </source>
</reference>
<gene>
    <name evidence="1" type="primary">leuC</name>
    <name type="ordered locus">jk1221</name>
</gene>
<comment type="function">
    <text evidence="1">Catalyzes the isomerization between 2-isopropylmalate and 3-isopropylmalate, via the formation of 2-isopropylmaleate.</text>
</comment>
<comment type="catalytic activity">
    <reaction evidence="1">
        <text>(2R,3S)-3-isopropylmalate = (2S)-2-isopropylmalate</text>
        <dbReference type="Rhea" id="RHEA:32287"/>
        <dbReference type="ChEBI" id="CHEBI:1178"/>
        <dbReference type="ChEBI" id="CHEBI:35121"/>
        <dbReference type="EC" id="4.2.1.33"/>
    </reaction>
</comment>
<comment type="cofactor">
    <cofactor evidence="1">
        <name>[4Fe-4S] cluster</name>
        <dbReference type="ChEBI" id="CHEBI:49883"/>
    </cofactor>
    <text evidence="1">Binds 1 [4Fe-4S] cluster per subunit.</text>
</comment>
<comment type="pathway">
    <text evidence="1">Amino-acid biosynthesis; L-leucine biosynthesis; L-leucine from 3-methyl-2-oxobutanoate: step 2/4.</text>
</comment>
<comment type="subunit">
    <text evidence="1">Heterodimer of LeuC and LeuD.</text>
</comment>
<comment type="similarity">
    <text evidence="1">Belongs to the aconitase/IPM isomerase family. LeuC type 1 subfamily.</text>
</comment>
<name>LEUC_CORJK</name>
<organism>
    <name type="scientific">Corynebacterium jeikeium (strain K411)</name>
    <dbReference type="NCBI Taxonomy" id="306537"/>
    <lineage>
        <taxon>Bacteria</taxon>
        <taxon>Bacillati</taxon>
        <taxon>Actinomycetota</taxon>
        <taxon>Actinomycetes</taxon>
        <taxon>Mycobacteriales</taxon>
        <taxon>Corynebacteriaceae</taxon>
        <taxon>Corynebacterium</taxon>
    </lineage>
</organism>
<feature type="chain" id="PRO_0000076742" description="3-isopropylmalate dehydratase large subunit">
    <location>
        <begin position="1"/>
        <end position="473"/>
    </location>
</feature>
<feature type="region of interest" description="Disordered" evidence="2">
    <location>
        <begin position="423"/>
        <end position="452"/>
    </location>
</feature>
<feature type="binding site" evidence="1">
    <location>
        <position position="355"/>
    </location>
    <ligand>
        <name>[4Fe-4S] cluster</name>
        <dbReference type="ChEBI" id="CHEBI:49883"/>
    </ligand>
</feature>
<feature type="binding site" evidence="1">
    <location>
        <position position="415"/>
    </location>
    <ligand>
        <name>[4Fe-4S] cluster</name>
        <dbReference type="ChEBI" id="CHEBI:49883"/>
    </ligand>
</feature>
<feature type="binding site" evidence="1">
    <location>
        <position position="418"/>
    </location>
    <ligand>
        <name>[4Fe-4S] cluster</name>
        <dbReference type="ChEBI" id="CHEBI:49883"/>
    </ligand>
</feature>